<accession>B1VET7</accession>
<proteinExistence type="inferred from homology"/>
<evidence type="ECO:0000255" key="1">
    <source>
        <dbReference type="HAMAP-Rule" id="MF_01328"/>
    </source>
</evidence>
<evidence type="ECO:0000256" key="2">
    <source>
        <dbReference type="SAM" id="MobiDB-lite"/>
    </source>
</evidence>
<evidence type="ECO:0000305" key="3"/>
<feature type="chain" id="PRO_1000142108" description="Large ribosomal subunit protein uL4">
    <location>
        <begin position="1"/>
        <end position="225"/>
    </location>
</feature>
<feature type="region of interest" description="Disordered" evidence="2">
    <location>
        <begin position="46"/>
        <end position="102"/>
    </location>
</feature>
<feature type="compositionally biased region" description="Basic residues" evidence="2">
    <location>
        <begin position="62"/>
        <end position="73"/>
    </location>
</feature>
<name>RL4_CORU7</name>
<comment type="function">
    <text evidence="1">One of the primary rRNA binding proteins, this protein initially binds near the 5'-end of the 23S rRNA. It is important during the early stages of 50S assembly. It makes multiple contacts with different domains of the 23S rRNA in the assembled 50S subunit and ribosome.</text>
</comment>
<comment type="function">
    <text evidence="1">Forms part of the polypeptide exit tunnel.</text>
</comment>
<comment type="subunit">
    <text evidence="1">Part of the 50S ribosomal subunit.</text>
</comment>
<comment type="similarity">
    <text evidence="1">Belongs to the universal ribosomal protein uL4 family.</text>
</comment>
<dbReference type="EMBL" id="AM942444">
    <property type="protein sequence ID" value="CAQ04276.1"/>
    <property type="molecule type" value="Genomic_DNA"/>
</dbReference>
<dbReference type="RefSeq" id="WP_012359576.1">
    <property type="nucleotide sequence ID" value="NC_010545.1"/>
</dbReference>
<dbReference type="SMR" id="B1VET7"/>
<dbReference type="STRING" id="504474.cu0316"/>
<dbReference type="GeneID" id="60605119"/>
<dbReference type="KEGG" id="cur:cu0316"/>
<dbReference type="eggNOG" id="COG0088">
    <property type="taxonomic scope" value="Bacteria"/>
</dbReference>
<dbReference type="HOGENOM" id="CLU_041575_5_0_11"/>
<dbReference type="Proteomes" id="UP000001727">
    <property type="component" value="Chromosome"/>
</dbReference>
<dbReference type="GO" id="GO:1990904">
    <property type="term" value="C:ribonucleoprotein complex"/>
    <property type="evidence" value="ECO:0007669"/>
    <property type="project" value="UniProtKB-KW"/>
</dbReference>
<dbReference type="GO" id="GO:0005840">
    <property type="term" value="C:ribosome"/>
    <property type="evidence" value="ECO:0007669"/>
    <property type="project" value="UniProtKB-KW"/>
</dbReference>
<dbReference type="GO" id="GO:0019843">
    <property type="term" value="F:rRNA binding"/>
    <property type="evidence" value="ECO:0007669"/>
    <property type="project" value="UniProtKB-UniRule"/>
</dbReference>
<dbReference type="GO" id="GO:0003735">
    <property type="term" value="F:structural constituent of ribosome"/>
    <property type="evidence" value="ECO:0007669"/>
    <property type="project" value="InterPro"/>
</dbReference>
<dbReference type="GO" id="GO:0006412">
    <property type="term" value="P:translation"/>
    <property type="evidence" value="ECO:0007669"/>
    <property type="project" value="UniProtKB-UniRule"/>
</dbReference>
<dbReference type="FunFam" id="3.40.1370.10:FF:000004">
    <property type="entry name" value="50S ribosomal protein L4"/>
    <property type="match status" value="1"/>
</dbReference>
<dbReference type="Gene3D" id="3.40.1370.10">
    <property type="match status" value="1"/>
</dbReference>
<dbReference type="HAMAP" id="MF_01328_B">
    <property type="entry name" value="Ribosomal_uL4_B"/>
    <property type="match status" value="1"/>
</dbReference>
<dbReference type="InterPro" id="IPR002136">
    <property type="entry name" value="Ribosomal_uL4"/>
</dbReference>
<dbReference type="InterPro" id="IPR013005">
    <property type="entry name" value="Ribosomal_uL4-like"/>
</dbReference>
<dbReference type="InterPro" id="IPR023574">
    <property type="entry name" value="Ribosomal_uL4_dom_sf"/>
</dbReference>
<dbReference type="NCBIfam" id="TIGR03953">
    <property type="entry name" value="rplD_bact"/>
    <property type="match status" value="1"/>
</dbReference>
<dbReference type="PANTHER" id="PTHR10746">
    <property type="entry name" value="50S RIBOSOMAL PROTEIN L4"/>
    <property type="match status" value="1"/>
</dbReference>
<dbReference type="PANTHER" id="PTHR10746:SF6">
    <property type="entry name" value="LARGE RIBOSOMAL SUBUNIT PROTEIN UL4M"/>
    <property type="match status" value="1"/>
</dbReference>
<dbReference type="Pfam" id="PF00573">
    <property type="entry name" value="Ribosomal_L4"/>
    <property type="match status" value="1"/>
</dbReference>
<dbReference type="SUPFAM" id="SSF52166">
    <property type="entry name" value="Ribosomal protein L4"/>
    <property type="match status" value="1"/>
</dbReference>
<organism>
    <name type="scientific">Corynebacterium urealyticum (strain ATCC 43042 / DSM 7109)</name>
    <dbReference type="NCBI Taxonomy" id="504474"/>
    <lineage>
        <taxon>Bacteria</taxon>
        <taxon>Bacillati</taxon>
        <taxon>Actinomycetota</taxon>
        <taxon>Actinomycetes</taxon>
        <taxon>Mycobacteriales</taxon>
        <taxon>Corynebacteriaceae</taxon>
        <taxon>Corynebacterium</taxon>
    </lineage>
</organism>
<reference key="1">
    <citation type="journal article" date="2008" name="J. Biotechnol.">
        <title>The lifestyle of Corynebacterium urealyticum derived from its complete genome sequence established by pyrosequencing.</title>
        <authorList>
            <person name="Tauch A."/>
            <person name="Trost E."/>
            <person name="Tilker A."/>
            <person name="Ludewig U."/>
            <person name="Schneiker S."/>
            <person name="Goesmann A."/>
            <person name="Arnold W."/>
            <person name="Bekel T."/>
            <person name="Brinkrolf K."/>
            <person name="Brune I."/>
            <person name="Goetker S."/>
            <person name="Kalinowski J."/>
            <person name="Kamp P.-B."/>
            <person name="Lobo F.P."/>
            <person name="Viehoever P."/>
            <person name="Weisshaar B."/>
            <person name="Soriano F."/>
            <person name="Droege M."/>
            <person name="Puehler A."/>
        </authorList>
    </citation>
    <scope>NUCLEOTIDE SEQUENCE [LARGE SCALE GENOMIC DNA]</scope>
    <source>
        <strain>ATCC 43042 / DSM 7109</strain>
    </source>
</reference>
<gene>
    <name evidence="1" type="primary">rplD</name>
    <name type="ordered locus">cu0316</name>
</gene>
<sequence>MSNLKLDVHTADGKTNGSVELPASIFDVEASVALMHQVVTAQLAAKRQGTHATKGRGEVRGGGRKPFRQKGTGRARQGSIRAPHFTGGGTVHGPQPRDYSQRTPKKMKAAALRGALSDRARHSRIHVIEELVPGQIPSTKSARSFLERLTERKQILVVLTREDLTARKSVANLPNVHALPADQLNTYDVLHADDVVFSVEALDAFIKAASGANKAEDQNTKEEAK</sequence>
<protein>
    <recommendedName>
        <fullName evidence="1">Large ribosomal subunit protein uL4</fullName>
    </recommendedName>
    <alternativeName>
        <fullName evidence="3">50S ribosomal protein L4</fullName>
    </alternativeName>
</protein>
<keyword id="KW-1185">Reference proteome</keyword>
<keyword id="KW-0687">Ribonucleoprotein</keyword>
<keyword id="KW-0689">Ribosomal protein</keyword>
<keyword id="KW-0694">RNA-binding</keyword>
<keyword id="KW-0699">rRNA-binding</keyword>